<dbReference type="EMBL" id="CP001164">
    <property type="protein sequence ID" value="ACI38993.1"/>
    <property type="molecule type" value="Genomic_DNA"/>
</dbReference>
<dbReference type="RefSeq" id="WP_000378258.1">
    <property type="nucleotide sequence ID" value="NC_011353.1"/>
</dbReference>
<dbReference type="SMR" id="B5YXA9"/>
<dbReference type="GeneID" id="93778448"/>
<dbReference type="KEGG" id="ecf:ECH74115_5135"/>
<dbReference type="HOGENOM" id="CLU_016535_3_0_6"/>
<dbReference type="GO" id="GO:0005886">
    <property type="term" value="C:plasma membrane"/>
    <property type="evidence" value="ECO:0007669"/>
    <property type="project" value="UniProtKB-SubCell"/>
</dbReference>
<dbReference type="GO" id="GO:0032977">
    <property type="term" value="F:membrane insertase activity"/>
    <property type="evidence" value="ECO:0007669"/>
    <property type="project" value="InterPro"/>
</dbReference>
<dbReference type="GO" id="GO:0051205">
    <property type="term" value="P:protein insertion into membrane"/>
    <property type="evidence" value="ECO:0007669"/>
    <property type="project" value="TreeGrafter"/>
</dbReference>
<dbReference type="GO" id="GO:0015031">
    <property type="term" value="P:protein transport"/>
    <property type="evidence" value="ECO:0007669"/>
    <property type="project" value="UniProtKB-KW"/>
</dbReference>
<dbReference type="CDD" id="cd20070">
    <property type="entry name" value="5TM_YidC_Alb3"/>
    <property type="match status" value="1"/>
</dbReference>
<dbReference type="CDD" id="cd19961">
    <property type="entry name" value="EcYidC-like_peri"/>
    <property type="match status" value="1"/>
</dbReference>
<dbReference type="FunFam" id="2.70.98.90:FF:000001">
    <property type="entry name" value="Membrane protein insertase YidC"/>
    <property type="match status" value="1"/>
</dbReference>
<dbReference type="Gene3D" id="2.70.98.90">
    <property type="match status" value="1"/>
</dbReference>
<dbReference type="HAMAP" id="MF_01810">
    <property type="entry name" value="YidC_type1"/>
    <property type="match status" value="1"/>
</dbReference>
<dbReference type="InterPro" id="IPR019998">
    <property type="entry name" value="Membr_insert_YidC"/>
</dbReference>
<dbReference type="InterPro" id="IPR028053">
    <property type="entry name" value="Membr_insert_YidC_N"/>
</dbReference>
<dbReference type="InterPro" id="IPR001708">
    <property type="entry name" value="YidC/ALB3/OXA1/COX18"/>
</dbReference>
<dbReference type="InterPro" id="IPR028055">
    <property type="entry name" value="YidC/Oxa/ALB_C"/>
</dbReference>
<dbReference type="InterPro" id="IPR047196">
    <property type="entry name" value="YidC_ALB_C"/>
</dbReference>
<dbReference type="InterPro" id="IPR038221">
    <property type="entry name" value="YidC_periplasmic_sf"/>
</dbReference>
<dbReference type="NCBIfam" id="NF002351">
    <property type="entry name" value="PRK01318.1-1"/>
    <property type="match status" value="1"/>
</dbReference>
<dbReference type="NCBIfam" id="NF002352">
    <property type="entry name" value="PRK01318.1-3"/>
    <property type="match status" value="1"/>
</dbReference>
<dbReference type="NCBIfam" id="NF002353">
    <property type="entry name" value="PRK01318.1-4"/>
    <property type="match status" value="1"/>
</dbReference>
<dbReference type="NCBIfam" id="TIGR03593">
    <property type="entry name" value="yidC_nterm"/>
    <property type="match status" value="1"/>
</dbReference>
<dbReference type="NCBIfam" id="TIGR03592">
    <property type="entry name" value="yidC_oxa1_cterm"/>
    <property type="match status" value="1"/>
</dbReference>
<dbReference type="PANTHER" id="PTHR12428:SF65">
    <property type="entry name" value="CYTOCHROME C OXIDASE ASSEMBLY PROTEIN COX18, MITOCHONDRIAL"/>
    <property type="match status" value="1"/>
</dbReference>
<dbReference type="PANTHER" id="PTHR12428">
    <property type="entry name" value="OXA1"/>
    <property type="match status" value="1"/>
</dbReference>
<dbReference type="Pfam" id="PF02096">
    <property type="entry name" value="60KD_IMP"/>
    <property type="match status" value="1"/>
</dbReference>
<dbReference type="Pfam" id="PF14849">
    <property type="entry name" value="YidC_periplas"/>
    <property type="match status" value="1"/>
</dbReference>
<dbReference type="PRINTS" id="PR00701">
    <property type="entry name" value="60KDINNERMP"/>
</dbReference>
<dbReference type="PRINTS" id="PR01900">
    <property type="entry name" value="YIDCPROTEIN"/>
</dbReference>
<comment type="function">
    <text evidence="1">Required for the insertion and/or proper folding and/or complex formation of integral membrane proteins into the membrane. Involved in integration of membrane proteins that insert both dependently and independently of the Sec translocase complex, as well as at least some lipoproteins. Aids folding of multispanning membrane proteins.</text>
</comment>
<comment type="subunit">
    <text evidence="1">Interacts with the Sec translocase complex via SecD. Specifically interacts with transmembrane segments of nascent integral membrane proteins during membrane integration.</text>
</comment>
<comment type="subcellular location">
    <subcellularLocation>
        <location evidence="1">Cell inner membrane</location>
        <topology evidence="1">Multi-pass membrane protein</topology>
    </subcellularLocation>
</comment>
<comment type="similarity">
    <text evidence="1">Belongs to the OXA1/ALB3/YidC family. Type 1 subfamily.</text>
</comment>
<feature type="chain" id="PRO_1000187658" description="Membrane protein insertase YidC">
    <location>
        <begin position="1"/>
        <end position="548"/>
    </location>
</feature>
<feature type="transmembrane region" description="Helical" evidence="1">
    <location>
        <begin position="6"/>
        <end position="26"/>
    </location>
</feature>
<feature type="transmembrane region" description="Helical" evidence="1">
    <location>
        <begin position="350"/>
        <end position="370"/>
    </location>
</feature>
<feature type="transmembrane region" description="Helical" evidence="1">
    <location>
        <begin position="420"/>
        <end position="440"/>
    </location>
</feature>
<feature type="transmembrane region" description="Helical" evidence="1">
    <location>
        <begin position="458"/>
        <end position="478"/>
    </location>
</feature>
<feature type="transmembrane region" description="Helical" evidence="1">
    <location>
        <begin position="499"/>
        <end position="519"/>
    </location>
</feature>
<feature type="region of interest" description="Disordered" evidence="2">
    <location>
        <begin position="28"/>
        <end position="55"/>
    </location>
</feature>
<feature type="compositionally biased region" description="Low complexity" evidence="2">
    <location>
        <begin position="30"/>
        <end position="50"/>
    </location>
</feature>
<accession>B5YXA9</accession>
<keyword id="KW-0997">Cell inner membrane</keyword>
<keyword id="KW-1003">Cell membrane</keyword>
<keyword id="KW-0143">Chaperone</keyword>
<keyword id="KW-0472">Membrane</keyword>
<keyword id="KW-0653">Protein transport</keyword>
<keyword id="KW-0812">Transmembrane</keyword>
<keyword id="KW-1133">Transmembrane helix</keyword>
<keyword id="KW-0813">Transport</keyword>
<organism>
    <name type="scientific">Escherichia coli O157:H7 (strain EC4115 / EHEC)</name>
    <dbReference type="NCBI Taxonomy" id="444450"/>
    <lineage>
        <taxon>Bacteria</taxon>
        <taxon>Pseudomonadati</taxon>
        <taxon>Pseudomonadota</taxon>
        <taxon>Gammaproteobacteria</taxon>
        <taxon>Enterobacterales</taxon>
        <taxon>Enterobacteriaceae</taxon>
        <taxon>Escherichia</taxon>
    </lineage>
</organism>
<protein>
    <recommendedName>
        <fullName evidence="1">Membrane protein insertase YidC</fullName>
    </recommendedName>
    <alternativeName>
        <fullName evidence="1">Foldase YidC</fullName>
    </alternativeName>
    <alternativeName>
        <fullName evidence="1">Membrane integrase YidC</fullName>
    </alternativeName>
    <alternativeName>
        <fullName evidence="1">Membrane protein YidC</fullName>
    </alternativeName>
</protein>
<name>YIDC_ECO5E</name>
<proteinExistence type="inferred from homology"/>
<sequence length="548" mass="61540">MDSQRNLLVIALLFVSFMIWQAWEQDKNPQPQAQQTTQTTTTAAGSAADQGVPASGQGKLISVKTDVLDLTINTRGGDVEQALLPAYPKELNSTQPFQLLETSPQFIYQAQSGLTGRDGPDNPANGPRPLYNVEKDAYVLAEGQNELQVPMTYTDAAGNTFTKTFVLKRGDYAVNVNYNVQNAGEKPLEISTFGQLKQSITLPPHLDTGSSNFALHTFRGAAYSTPDEKYEKYKFDTIADNENLNISSKGGWVAMLQQYFATAWIPHNDGTNNFYTANLGNGIAAIGYKSQPVLVQPGQTGAMNSTLWVGPEIQDKMAAVAPHLDLTVDYGWLWFISQPLFKLLKWIHSFVGNWGFSIIIITFIVRGIMYPLTKAQYTSMAKMRMLQPKIQAMRERLGDDKQRISQEMMALYKAEKVNPLGGCFPLLIQMPIFLALYYMLMGSVELRQAPFALWIHDLSAQDPYYILPILMGVTMFFIQKMSPTTVTDPMQQKIMTFMPVIFTVFFLWFPSGLVLYYIVSNLVTIIQQQLIYRGLEKRGLHSREKKKS</sequence>
<evidence type="ECO:0000255" key="1">
    <source>
        <dbReference type="HAMAP-Rule" id="MF_01810"/>
    </source>
</evidence>
<evidence type="ECO:0000256" key="2">
    <source>
        <dbReference type="SAM" id="MobiDB-lite"/>
    </source>
</evidence>
<reference key="1">
    <citation type="journal article" date="2011" name="Proc. Natl. Acad. Sci. U.S.A.">
        <title>Genomic anatomy of Escherichia coli O157:H7 outbreaks.</title>
        <authorList>
            <person name="Eppinger M."/>
            <person name="Mammel M.K."/>
            <person name="Leclerc J.E."/>
            <person name="Ravel J."/>
            <person name="Cebula T.A."/>
        </authorList>
    </citation>
    <scope>NUCLEOTIDE SEQUENCE [LARGE SCALE GENOMIC DNA]</scope>
    <source>
        <strain>EC4115 / EHEC</strain>
    </source>
</reference>
<gene>
    <name evidence="1" type="primary">yidC</name>
    <name type="ordered locus">ECH74115_5135</name>
</gene>